<protein>
    <recommendedName>
        <fullName>Unknown protein 23 from 2D-PAGE</fullName>
    </recommendedName>
</protein>
<organism>
    <name type="scientific">Bombyx mori</name>
    <name type="common">Silk moth</name>
    <dbReference type="NCBI Taxonomy" id="7091"/>
    <lineage>
        <taxon>Eukaryota</taxon>
        <taxon>Metazoa</taxon>
        <taxon>Ecdysozoa</taxon>
        <taxon>Arthropoda</taxon>
        <taxon>Hexapoda</taxon>
        <taxon>Insecta</taxon>
        <taxon>Pterygota</taxon>
        <taxon>Neoptera</taxon>
        <taxon>Endopterygota</taxon>
        <taxon>Lepidoptera</taxon>
        <taxon>Glossata</taxon>
        <taxon>Ditrysia</taxon>
        <taxon>Bombycoidea</taxon>
        <taxon>Bombycidae</taxon>
        <taxon>Bombycinae</taxon>
        <taxon>Bombyx</taxon>
    </lineage>
</organism>
<name>UP23_BOMMO</name>
<feature type="chain" id="PRO_0000274542" description="Unknown protein 23 from 2D-PAGE">
    <location>
        <begin position="1"/>
        <end position="10" status="greater than"/>
    </location>
</feature>
<feature type="non-terminal residue" evidence="2">
    <location>
        <position position="10"/>
    </location>
</feature>
<reference evidence="3" key="1">
    <citation type="journal article" date="2001" name="Yi Chuan Xue Bao">
        <title>Protein database for several tissues derived from five instar of silkworm.</title>
        <authorList>
            <person name="Zhong B.-X."/>
        </authorList>
    </citation>
    <scope>PROTEIN SEQUENCE</scope>
    <source>
        <strain evidence="1">Xinhang X Keming</strain>
        <tissue evidence="1">Body wall</tissue>
        <tissue evidence="1">Fat body</tissue>
    </source>
</reference>
<evidence type="ECO:0000269" key="1">
    <source>
    </source>
</evidence>
<evidence type="ECO:0000303" key="2">
    <source>
    </source>
</evidence>
<evidence type="ECO:0000305" key="3"/>
<dbReference type="InParanoid" id="P82221"/>
<dbReference type="Proteomes" id="UP000005204">
    <property type="component" value="Unassembled WGS sequence"/>
</dbReference>
<sequence length="10" mass="1118">ESKDPEDSXT</sequence>
<accession>P82221</accession>
<keyword id="KW-0903">Direct protein sequencing</keyword>
<keyword id="KW-1185">Reference proteome</keyword>
<proteinExistence type="evidence at protein level"/>